<dbReference type="EC" id="3.1.26.4" evidence="1"/>
<dbReference type="EMBL" id="AJ749949">
    <property type="protein sequence ID" value="CAG45911.1"/>
    <property type="molecule type" value="Genomic_DNA"/>
</dbReference>
<dbReference type="RefSeq" id="WP_003021956.1">
    <property type="nucleotide sequence ID" value="NZ_CP010290.1"/>
</dbReference>
<dbReference type="RefSeq" id="YP_170234.1">
    <property type="nucleotide sequence ID" value="NC_006570.2"/>
</dbReference>
<dbReference type="SMR" id="Q5NFF8"/>
<dbReference type="STRING" id="177416.FTT_1278c"/>
<dbReference type="DNASU" id="3191604"/>
<dbReference type="EnsemblBacteria" id="CAG45911">
    <property type="protein sequence ID" value="CAG45911"/>
    <property type="gene ID" value="FTT_1278c"/>
</dbReference>
<dbReference type="KEGG" id="ftu:FTT_1278c"/>
<dbReference type="eggNOG" id="COG0164">
    <property type="taxonomic scope" value="Bacteria"/>
</dbReference>
<dbReference type="OrthoDB" id="9803420at2"/>
<dbReference type="Proteomes" id="UP000001174">
    <property type="component" value="Chromosome"/>
</dbReference>
<dbReference type="GO" id="GO:0005737">
    <property type="term" value="C:cytoplasm"/>
    <property type="evidence" value="ECO:0007669"/>
    <property type="project" value="UniProtKB-SubCell"/>
</dbReference>
<dbReference type="GO" id="GO:0032299">
    <property type="term" value="C:ribonuclease H2 complex"/>
    <property type="evidence" value="ECO:0007669"/>
    <property type="project" value="TreeGrafter"/>
</dbReference>
<dbReference type="GO" id="GO:0030145">
    <property type="term" value="F:manganese ion binding"/>
    <property type="evidence" value="ECO:0007669"/>
    <property type="project" value="UniProtKB-UniRule"/>
</dbReference>
<dbReference type="GO" id="GO:0003723">
    <property type="term" value="F:RNA binding"/>
    <property type="evidence" value="ECO:0007669"/>
    <property type="project" value="InterPro"/>
</dbReference>
<dbReference type="GO" id="GO:0004523">
    <property type="term" value="F:RNA-DNA hybrid ribonuclease activity"/>
    <property type="evidence" value="ECO:0007669"/>
    <property type="project" value="UniProtKB-UniRule"/>
</dbReference>
<dbReference type="GO" id="GO:0043137">
    <property type="term" value="P:DNA replication, removal of RNA primer"/>
    <property type="evidence" value="ECO:0007669"/>
    <property type="project" value="TreeGrafter"/>
</dbReference>
<dbReference type="GO" id="GO:0006298">
    <property type="term" value="P:mismatch repair"/>
    <property type="evidence" value="ECO:0007669"/>
    <property type="project" value="TreeGrafter"/>
</dbReference>
<dbReference type="CDD" id="cd07182">
    <property type="entry name" value="RNase_HII_bacteria_HII_like"/>
    <property type="match status" value="1"/>
</dbReference>
<dbReference type="FunFam" id="3.30.420.10:FF:000006">
    <property type="entry name" value="Ribonuclease HII"/>
    <property type="match status" value="1"/>
</dbReference>
<dbReference type="Gene3D" id="3.30.420.10">
    <property type="entry name" value="Ribonuclease H-like superfamily/Ribonuclease H"/>
    <property type="match status" value="1"/>
</dbReference>
<dbReference type="HAMAP" id="MF_00052_B">
    <property type="entry name" value="RNase_HII_B"/>
    <property type="match status" value="1"/>
</dbReference>
<dbReference type="InterPro" id="IPR022898">
    <property type="entry name" value="RNase_HII"/>
</dbReference>
<dbReference type="InterPro" id="IPR001352">
    <property type="entry name" value="RNase_HII/HIII"/>
</dbReference>
<dbReference type="InterPro" id="IPR024567">
    <property type="entry name" value="RNase_HII/HIII_dom"/>
</dbReference>
<dbReference type="InterPro" id="IPR012337">
    <property type="entry name" value="RNaseH-like_sf"/>
</dbReference>
<dbReference type="InterPro" id="IPR036397">
    <property type="entry name" value="RNaseH_sf"/>
</dbReference>
<dbReference type="NCBIfam" id="NF000595">
    <property type="entry name" value="PRK00015.1-3"/>
    <property type="match status" value="1"/>
</dbReference>
<dbReference type="NCBIfam" id="NF000596">
    <property type="entry name" value="PRK00015.1-4"/>
    <property type="match status" value="1"/>
</dbReference>
<dbReference type="PANTHER" id="PTHR10954">
    <property type="entry name" value="RIBONUCLEASE H2 SUBUNIT A"/>
    <property type="match status" value="1"/>
</dbReference>
<dbReference type="PANTHER" id="PTHR10954:SF18">
    <property type="entry name" value="RIBONUCLEASE HII"/>
    <property type="match status" value="1"/>
</dbReference>
<dbReference type="Pfam" id="PF01351">
    <property type="entry name" value="RNase_HII"/>
    <property type="match status" value="1"/>
</dbReference>
<dbReference type="SUPFAM" id="SSF53098">
    <property type="entry name" value="Ribonuclease H-like"/>
    <property type="match status" value="1"/>
</dbReference>
<dbReference type="PROSITE" id="PS51975">
    <property type="entry name" value="RNASE_H_2"/>
    <property type="match status" value="1"/>
</dbReference>
<proteinExistence type="inferred from homology"/>
<name>RNH2_FRATT</name>
<organism>
    <name type="scientific">Francisella tularensis subsp. tularensis (strain SCHU S4 / Schu 4)</name>
    <dbReference type="NCBI Taxonomy" id="177416"/>
    <lineage>
        <taxon>Bacteria</taxon>
        <taxon>Pseudomonadati</taxon>
        <taxon>Pseudomonadota</taxon>
        <taxon>Gammaproteobacteria</taxon>
        <taxon>Thiotrichales</taxon>
        <taxon>Francisellaceae</taxon>
        <taxon>Francisella</taxon>
    </lineage>
</organism>
<reference key="1">
    <citation type="journal article" date="2005" name="Nat. Genet.">
        <title>The complete genome sequence of Francisella tularensis, the causative agent of tularemia.</title>
        <authorList>
            <person name="Larsson P."/>
            <person name="Oyston P.C.F."/>
            <person name="Chain P."/>
            <person name="Chu M.C."/>
            <person name="Duffield M."/>
            <person name="Fuxelius H.-H."/>
            <person name="Garcia E."/>
            <person name="Haelltorp G."/>
            <person name="Johansson D."/>
            <person name="Isherwood K.E."/>
            <person name="Karp P.D."/>
            <person name="Larsson E."/>
            <person name="Liu Y."/>
            <person name="Michell S."/>
            <person name="Prior J."/>
            <person name="Prior R."/>
            <person name="Malfatti S."/>
            <person name="Sjoestedt A."/>
            <person name="Svensson K."/>
            <person name="Thompson N."/>
            <person name="Vergez L."/>
            <person name="Wagg J.K."/>
            <person name="Wren B.W."/>
            <person name="Lindler L.E."/>
            <person name="Andersson S.G.E."/>
            <person name="Forsman M."/>
            <person name="Titball R.W."/>
        </authorList>
    </citation>
    <scope>NUCLEOTIDE SEQUENCE [LARGE SCALE GENOMIC DNA]</scope>
    <source>
        <strain>SCHU S4 / Schu 4</strain>
    </source>
</reference>
<comment type="function">
    <text evidence="1">Endonuclease that specifically degrades the RNA of RNA-DNA hybrids.</text>
</comment>
<comment type="catalytic activity">
    <reaction evidence="1">
        <text>Endonucleolytic cleavage to 5'-phosphomonoester.</text>
        <dbReference type="EC" id="3.1.26.4"/>
    </reaction>
</comment>
<comment type="cofactor">
    <cofactor evidence="1">
        <name>Mn(2+)</name>
        <dbReference type="ChEBI" id="CHEBI:29035"/>
    </cofactor>
    <cofactor evidence="1">
        <name>Mg(2+)</name>
        <dbReference type="ChEBI" id="CHEBI:18420"/>
    </cofactor>
    <text evidence="1">Manganese or magnesium. Binds 1 divalent metal ion per monomer in the absence of substrate. May bind a second metal ion after substrate binding.</text>
</comment>
<comment type="subcellular location">
    <subcellularLocation>
        <location evidence="1">Cytoplasm</location>
    </subcellularLocation>
</comment>
<comment type="similarity">
    <text evidence="1">Belongs to the RNase HII family.</text>
</comment>
<keyword id="KW-0963">Cytoplasm</keyword>
<keyword id="KW-0255">Endonuclease</keyword>
<keyword id="KW-0378">Hydrolase</keyword>
<keyword id="KW-0464">Manganese</keyword>
<keyword id="KW-0479">Metal-binding</keyword>
<keyword id="KW-0540">Nuclease</keyword>
<keyword id="KW-1185">Reference proteome</keyword>
<gene>
    <name evidence="1" type="primary">rnhB</name>
    <name type="ordered locus">FTT_1278c</name>
</gene>
<evidence type="ECO:0000255" key="1">
    <source>
        <dbReference type="HAMAP-Rule" id="MF_00052"/>
    </source>
</evidence>
<evidence type="ECO:0000255" key="2">
    <source>
        <dbReference type="PROSITE-ProRule" id="PRU01319"/>
    </source>
</evidence>
<feature type="chain" id="PRO_0000235724" description="Ribonuclease HII">
    <location>
        <begin position="1"/>
        <end position="187"/>
    </location>
</feature>
<feature type="domain" description="RNase H type-2" evidence="2">
    <location>
        <begin position="1"/>
        <end position="187"/>
    </location>
</feature>
<feature type="binding site" evidence="1">
    <location>
        <position position="7"/>
    </location>
    <ligand>
        <name>a divalent metal cation</name>
        <dbReference type="ChEBI" id="CHEBI:60240"/>
    </ligand>
</feature>
<feature type="binding site" evidence="1">
    <location>
        <position position="8"/>
    </location>
    <ligand>
        <name>a divalent metal cation</name>
        <dbReference type="ChEBI" id="CHEBI:60240"/>
    </ligand>
</feature>
<feature type="binding site" evidence="1">
    <location>
        <position position="99"/>
    </location>
    <ligand>
        <name>a divalent metal cation</name>
        <dbReference type="ChEBI" id="CHEBI:60240"/>
    </ligand>
</feature>
<protein>
    <recommendedName>
        <fullName evidence="1">Ribonuclease HII</fullName>
        <shortName evidence="1">RNase HII</shortName>
        <ecNumber evidence="1">3.1.26.4</ecNumber>
    </recommendedName>
</protein>
<sequence>MIILGIDEAGRGPLSGPVVAAGVILDQDKIIDGLADSKKLTEKKRQSLYQQIITHAKAYTIVEISPQQIDELNILQATLKAMHQVANNLERQFDKVLVDGNKLPNWDYNSEAIVKGDSKIIEISAASILAKVHRDNICLEHDRLYPQYGFAKHKGYPTKEHLENIKKYGVLDIHRKSYKPVQVLLNE</sequence>
<accession>Q5NFF8</accession>